<name>THIM_STAA9</name>
<dbReference type="EC" id="2.7.1.50" evidence="1"/>
<dbReference type="EMBL" id="CP000703">
    <property type="protein sequence ID" value="ABQ49911.1"/>
    <property type="molecule type" value="Genomic_DNA"/>
</dbReference>
<dbReference type="RefSeq" id="WP_001108483.1">
    <property type="nucleotide sequence ID" value="NC_009487.1"/>
</dbReference>
<dbReference type="SMR" id="A5IUN8"/>
<dbReference type="KEGG" id="saj:SaurJH9_2129"/>
<dbReference type="HOGENOM" id="CLU_019943_0_2_9"/>
<dbReference type="UniPathway" id="UPA00060">
    <property type="reaction ID" value="UER00139"/>
</dbReference>
<dbReference type="GO" id="GO:0005524">
    <property type="term" value="F:ATP binding"/>
    <property type="evidence" value="ECO:0007669"/>
    <property type="project" value="UniProtKB-UniRule"/>
</dbReference>
<dbReference type="GO" id="GO:0004417">
    <property type="term" value="F:hydroxyethylthiazole kinase activity"/>
    <property type="evidence" value="ECO:0007669"/>
    <property type="project" value="UniProtKB-UniRule"/>
</dbReference>
<dbReference type="GO" id="GO:0000287">
    <property type="term" value="F:magnesium ion binding"/>
    <property type="evidence" value="ECO:0007669"/>
    <property type="project" value="UniProtKB-UniRule"/>
</dbReference>
<dbReference type="GO" id="GO:0009228">
    <property type="term" value="P:thiamine biosynthetic process"/>
    <property type="evidence" value="ECO:0007669"/>
    <property type="project" value="UniProtKB-KW"/>
</dbReference>
<dbReference type="GO" id="GO:0009229">
    <property type="term" value="P:thiamine diphosphate biosynthetic process"/>
    <property type="evidence" value="ECO:0007669"/>
    <property type="project" value="UniProtKB-UniRule"/>
</dbReference>
<dbReference type="CDD" id="cd01170">
    <property type="entry name" value="THZ_kinase"/>
    <property type="match status" value="1"/>
</dbReference>
<dbReference type="Gene3D" id="3.40.1190.20">
    <property type="match status" value="1"/>
</dbReference>
<dbReference type="HAMAP" id="MF_00228">
    <property type="entry name" value="Thz_kinase"/>
    <property type="match status" value="1"/>
</dbReference>
<dbReference type="InterPro" id="IPR000417">
    <property type="entry name" value="Hyethyz_kinase"/>
</dbReference>
<dbReference type="InterPro" id="IPR029056">
    <property type="entry name" value="Ribokinase-like"/>
</dbReference>
<dbReference type="NCBIfam" id="NF006830">
    <property type="entry name" value="PRK09355.1"/>
    <property type="match status" value="1"/>
</dbReference>
<dbReference type="Pfam" id="PF02110">
    <property type="entry name" value="HK"/>
    <property type="match status" value="1"/>
</dbReference>
<dbReference type="PIRSF" id="PIRSF000513">
    <property type="entry name" value="Thz_kinase"/>
    <property type="match status" value="1"/>
</dbReference>
<dbReference type="PRINTS" id="PR01099">
    <property type="entry name" value="HYETHTZKNASE"/>
</dbReference>
<dbReference type="SUPFAM" id="SSF53613">
    <property type="entry name" value="Ribokinase-like"/>
    <property type="match status" value="1"/>
</dbReference>
<gene>
    <name evidence="1" type="primary">thiM</name>
    <name type="ordered locus">SaurJH9_2129</name>
</gene>
<accession>A5IUN8</accession>
<sequence length="263" mass="28067">MNYLNKIRIENPLTICYTNDVVKNFTANGLLSIGASPAMSEAPEEAEEFYKVAQALLINIGTLTAQNEQDIIAIAQTANEAGLPIVFDPVAVGASTYRKQFCKLLLKSAKVSVIKGNASEILALIDDTATMKGTDSDANLDAVAIAKKAYAIYKTAIVITGKEDVIVQDNKAIVLANGSPLLARVTGAGCLLGGVIAGFLFRETEPDIEALIEAVSVFNIAAEVAAENENCGGPGTFSPLLLDTLYHLNETTYQQRIRIQEVE</sequence>
<organism>
    <name type="scientific">Staphylococcus aureus (strain JH9)</name>
    <dbReference type="NCBI Taxonomy" id="359786"/>
    <lineage>
        <taxon>Bacteria</taxon>
        <taxon>Bacillati</taxon>
        <taxon>Bacillota</taxon>
        <taxon>Bacilli</taxon>
        <taxon>Bacillales</taxon>
        <taxon>Staphylococcaceae</taxon>
        <taxon>Staphylococcus</taxon>
    </lineage>
</organism>
<evidence type="ECO:0000255" key="1">
    <source>
        <dbReference type="HAMAP-Rule" id="MF_00228"/>
    </source>
</evidence>
<protein>
    <recommendedName>
        <fullName evidence="1">Hydroxyethylthiazole kinase</fullName>
        <ecNumber evidence="1">2.7.1.50</ecNumber>
    </recommendedName>
    <alternativeName>
        <fullName evidence="1">4-methyl-5-beta-hydroxyethylthiazole kinase</fullName>
        <shortName evidence="1">TH kinase</shortName>
        <shortName evidence="1">Thz kinase</shortName>
    </alternativeName>
</protein>
<keyword id="KW-0067">ATP-binding</keyword>
<keyword id="KW-0418">Kinase</keyword>
<keyword id="KW-0460">Magnesium</keyword>
<keyword id="KW-0479">Metal-binding</keyword>
<keyword id="KW-0547">Nucleotide-binding</keyword>
<keyword id="KW-0784">Thiamine biosynthesis</keyword>
<keyword id="KW-0808">Transferase</keyword>
<reference key="1">
    <citation type="submission" date="2007-05" db="EMBL/GenBank/DDBJ databases">
        <title>Complete sequence of chromosome of Staphylococcus aureus subsp. aureus JH9.</title>
        <authorList>
            <consortium name="US DOE Joint Genome Institute"/>
            <person name="Copeland A."/>
            <person name="Lucas S."/>
            <person name="Lapidus A."/>
            <person name="Barry K."/>
            <person name="Detter J.C."/>
            <person name="Glavina del Rio T."/>
            <person name="Hammon N."/>
            <person name="Israni S."/>
            <person name="Pitluck S."/>
            <person name="Chain P."/>
            <person name="Malfatti S."/>
            <person name="Shin M."/>
            <person name="Vergez L."/>
            <person name="Schmutz J."/>
            <person name="Larimer F."/>
            <person name="Land M."/>
            <person name="Hauser L."/>
            <person name="Kyrpides N."/>
            <person name="Kim E."/>
            <person name="Tomasz A."/>
            <person name="Richardson P."/>
        </authorList>
    </citation>
    <scope>NUCLEOTIDE SEQUENCE [LARGE SCALE GENOMIC DNA]</scope>
    <source>
        <strain>JH9</strain>
    </source>
</reference>
<comment type="function">
    <text evidence="1">Catalyzes the phosphorylation of the hydroxyl group of 4-methyl-5-beta-hydroxyethylthiazole (THZ).</text>
</comment>
<comment type="catalytic activity">
    <reaction evidence="1">
        <text>5-(2-hydroxyethyl)-4-methylthiazole + ATP = 4-methyl-5-(2-phosphooxyethyl)-thiazole + ADP + H(+)</text>
        <dbReference type="Rhea" id="RHEA:24212"/>
        <dbReference type="ChEBI" id="CHEBI:15378"/>
        <dbReference type="ChEBI" id="CHEBI:17957"/>
        <dbReference type="ChEBI" id="CHEBI:30616"/>
        <dbReference type="ChEBI" id="CHEBI:58296"/>
        <dbReference type="ChEBI" id="CHEBI:456216"/>
        <dbReference type="EC" id="2.7.1.50"/>
    </reaction>
</comment>
<comment type="cofactor">
    <cofactor evidence="1">
        <name>Mg(2+)</name>
        <dbReference type="ChEBI" id="CHEBI:18420"/>
    </cofactor>
</comment>
<comment type="pathway">
    <text evidence="1">Cofactor biosynthesis; thiamine diphosphate biosynthesis; 4-methyl-5-(2-phosphoethyl)-thiazole from 5-(2-hydroxyethyl)-4-methylthiazole: step 1/1.</text>
</comment>
<comment type="similarity">
    <text evidence="1">Belongs to the Thz kinase family.</text>
</comment>
<proteinExistence type="inferred from homology"/>
<feature type="chain" id="PRO_1000078219" description="Hydroxyethylthiazole kinase">
    <location>
        <begin position="1"/>
        <end position="263"/>
    </location>
</feature>
<feature type="binding site" evidence="1">
    <location>
        <position position="39"/>
    </location>
    <ligand>
        <name>substrate</name>
    </ligand>
</feature>
<feature type="binding site" evidence="1">
    <location>
        <position position="115"/>
    </location>
    <ligand>
        <name>ATP</name>
        <dbReference type="ChEBI" id="CHEBI:30616"/>
    </ligand>
</feature>
<feature type="binding site" evidence="1">
    <location>
        <position position="160"/>
    </location>
    <ligand>
        <name>ATP</name>
        <dbReference type="ChEBI" id="CHEBI:30616"/>
    </ligand>
</feature>
<feature type="binding site" evidence="1">
    <location>
        <position position="187"/>
    </location>
    <ligand>
        <name>substrate</name>
    </ligand>
</feature>